<organism>
    <name type="scientific">Caldicellulosiruptor bescii (strain ATCC BAA-1888 / DSM 6725 / KCTC 15123 / Z-1320)</name>
    <name type="common">Anaerocellum thermophilum</name>
    <dbReference type="NCBI Taxonomy" id="521460"/>
    <lineage>
        <taxon>Bacteria</taxon>
        <taxon>Bacillati</taxon>
        <taxon>Bacillota</taxon>
        <taxon>Bacillota incertae sedis</taxon>
        <taxon>Caldicellulosiruptorales</taxon>
        <taxon>Caldicellulosiruptoraceae</taxon>
        <taxon>Caldicellulosiruptor</taxon>
    </lineage>
</organism>
<dbReference type="EMBL" id="CP001393">
    <property type="protein sequence ID" value="ACM61213.1"/>
    <property type="molecule type" value="Genomic_DNA"/>
</dbReference>
<dbReference type="RefSeq" id="WP_011916829.1">
    <property type="nucleotide sequence ID" value="NC_012034.1"/>
</dbReference>
<dbReference type="SMR" id="B9MLZ0"/>
<dbReference type="STRING" id="521460.Athe_2138"/>
<dbReference type="GeneID" id="31773487"/>
<dbReference type="KEGG" id="ate:Athe_2138"/>
<dbReference type="eggNOG" id="COG0234">
    <property type="taxonomic scope" value="Bacteria"/>
</dbReference>
<dbReference type="HOGENOM" id="CLU_132825_2_0_9"/>
<dbReference type="Proteomes" id="UP000007723">
    <property type="component" value="Chromosome"/>
</dbReference>
<dbReference type="GO" id="GO:0005737">
    <property type="term" value="C:cytoplasm"/>
    <property type="evidence" value="ECO:0007669"/>
    <property type="project" value="UniProtKB-SubCell"/>
</dbReference>
<dbReference type="GO" id="GO:0005524">
    <property type="term" value="F:ATP binding"/>
    <property type="evidence" value="ECO:0007669"/>
    <property type="project" value="InterPro"/>
</dbReference>
<dbReference type="GO" id="GO:0046872">
    <property type="term" value="F:metal ion binding"/>
    <property type="evidence" value="ECO:0007669"/>
    <property type="project" value="TreeGrafter"/>
</dbReference>
<dbReference type="GO" id="GO:0044183">
    <property type="term" value="F:protein folding chaperone"/>
    <property type="evidence" value="ECO:0007669"/>
    <property type="project" value="InterPro"/>
</dbReference>
<dbReference type="GO" id="GO:0051087">
    <property type="term" value="F:protein-folding chaperone binding"/>
    <property type="evidence" value="ECO:0007669"/>
    <property type="project" value="TreeGrafter"/>
</dbReference>
<dbReference type="GO" id="GO:0051082">
    <property type="term" value="F:unfolded protein binding"/>
    <property type="evidence" value="ECO:0007669"/>
    <property type="project" value="TreeGrafter"/>
</dbReference>
<dbReference type="GO" id="GO:0051085">
    <property type="term" value="P:chaperone cofactor-dependent protein refolding"/>
    <property type="evidence" value="ECO:0007669"/>
    <property type="project" value="TreeGrafter"/>
</dbReference>
<dbReference type="CDD" id="cd00320">
    <property type="entry name" value="cpn10"/>
    <property type="match status" value="1"/>
</dbReference>
<dbReference type="FunFam" id="2.30.33.40:FF:000001">
    <property type="entry name" value="10 kDa chaperonin"/>
    <property type="match status" value="1"/>
</dbReference>
<dbReference type="Gene3D" id="2.30.33.40">
    <property type="entry name" value="GroES chaperonin"/>
    <property type="match status" value="1"/>
</dbReference>
<dbReference type="HAMAP" id="MF_00580">
    <property type="entry name" value="CH10"/>
    <property type="match status" value="1"/>
</dbReference>
<dbReference type="InterPro" id="IPR020818">
    <property type="entry name" value="Chaperonin_GroES"/>
</dbReference>
<dbReference type="InterPro" id="IPR037124">
    <property type="entry name" value="Chaperonin_GroES_sf"/>
</dbReference>
<dbReference type="InterPro" id="IPR018369">
    <property type="entry name" value="Chaprnonin_Cpn10_CS"/>
</dbReference>
<dbReference type="InterPro" id="IPR011032">
    <property type="entry name" value="GroES-like_sf"/>
</dbReference>
<dbReference type="NCBIfam" id="NF001531">
    <property type="entry name" value="PRK00364.2-2"/>
    <property type="match status" value="1"/>
</dbReference>
<dbReference type="NCBIfam" id="NF001533">
    <property type="entry name" value="PRK00364.2-4"/>
    <property type="match status" value="1"/>
</dbReference>
<dbReference type="PANTHER" id="PTHR10772">
    <property type="entry name" value="10 KDA HEAT SHOCK PROTEIN"/>
    <property type="match status" value="1"/>
</dbReference>
<dbReference type="PANTHER" id="PTHR10772:SF58">
    <property type="entry name" value="CO-CHAPERONIN GROES"/>
    <property type="match status" value="1"/>
</dbReference>
<dbReference type="Pfam" id="PF00166">
    <property type="entry name" value="Cpn10"/>
    <property type="match status" value="1"/>
</dbReference>
<dbReference type="PRINTS" id="PR00297">
    <property type="entry name" value="CHAPERONIN10"/>
</dbReference>
<dbReference type="SMART" id="SM00883">
    <property type="entry name" value="Cpn10"/>
    <property type="match status" value="1"/>
</dbReference>
<dbReference type="SUPFAM" id="SSF50129">
    <property type="entry name" value="GroES-like"/>
    <property type="match status" value="1"/>
</dbReference>
<dbReference type="PROSITE" id="PS00681">
    <property type="entry name" value="CHAPERONINS_CPN10"/>
    <property type="match status" value="1"/>
</dbReference>
<protein>
    <recommendedName>
        <fullName evidence="1">Co-chaperonin GroES</fullName>
    </recommendedName>
    <alternativeName>
        <fullName evidence="1">10 kDa chaperonin</fullName>
    </alternativeName>
    <alternativeName>
        <fullName evidence="1">Chaperonin-10</fullName>
        <shortName evidence="1">Cpn10</shortName>
    </alternativeName>
</protein>
<sequence>MKIRPIGDRILIKFKEREEVTKSGIVLPDTVKEKPQIAEVIEVGPGGIVDGEKVEMVVKKGDKVIVSKYAGTEIKIDGEEYTIIRQDDVLAIIED</sequence>
<gene>
    <name evidence="1" type="primary">groES</name>
    <name evidence="1" type="synonym">groS</name>
    <name type="ordered locus">Athe_2138</name>
</gene>
<evidence type="ECO:0000255" key="1">
    <source>
        <dbReference type="HAMAP-Rule" id="MF_00580"/>
    </source>
</evidence>
<name>CH10_CALBD</name>
<reference key="1">
    <citation type="submission" date="2009-01" db="EMBL/GenBank/DDBJ databases">
        <title>Complete sequence of chromosome of Caldicellulosiruptor becscii DSM 6725.</title>
        <authorList>
            <person name="Lucas S."/>
            <person name="Copeland A."/>
            <person name="Lapidus A."/>
            <person name="Glavina del Rio T."/>
            <person name="Tice H."/>
            <person name="Bruce D."/>
            <person name="Goodwin L."/>
            <person name="Pitluck S."/>
            <person name="Sims D."/>
            <person name="Meincke L."/>
            <person name="Brettin T."/>
            <person name="Detter J.C."/>
            <person name="Han C."/>
            <person name="Larimer F."/>
            <person name="Land M."/>
            <person name="Hauser L."/>
            <person name="Kyrpides N."/>
            <person name="Ovchinnikova G."/>
            <person name="Kataeva I."/>
            <person name="Adams M.W.W."/>
        </authorList>
    </citation>
    <scope>NUCLEOTIDE SEQUENCE [LARGE SCALE GENOMIC DNA]</scope>
    <source>
        <strain>ATCC BAA-1888 / DSM 6725 / KCTC 15123 / Z-1320</strain>
    </source>
</reference>
<keyword id="KW-0143">Chaperone</keyword>
<keyword id="KW-0963">Cytoplasm</keyword>
<accession>B9MLZ0</accession>
<feature type="chain" id="PRO_1000146882" description="Co-chaperonin GroES">
    <location>
        <begin position="1"/>
        <end position="95"/>
    </location>
</feature>
<comment type="function">
    <text evidence="1">Together with the chaperonin GroEL, plays an essential role in assisting protein folding. The GroEL-GroES system forms a nano-cage that allows encapsulation of the non-native substrate proteins and provides a physical environment optimized to promote and accelerate protein folding. GroES binds to the apical surface of the GroEL ring, thereby capping the opening of the GroEL channel.</text>
</comment>
<comment type="subunit">
    <text evidence="1">Heptamer of 7 subunits arranged in a ring. Interacts with the chaperonin GroEL.</text>
</comment>
<comment type="subcellular location">
    <subcellularLocation>
        <location evidence="1">Cytoplasm</location>
    </subcellularLocation>
</comment>
<comment type="similarity">
    <text evidence="1">Belongs to the GroES chaperonin family.</text>
</comment>
<proteinExistence type="inferred from homology"/>